<gene>
    <name type="primary">sel-8</name>
    <name type="synonym">lag-3</name>
    <name type="ORF">C32A3.1</name>
</gene>
<reference key="1">
    <citation type="journal article" date="2000" name="Nature">
        <title>LAG-3 is a putative transcriptional activator in the C. elegans Notch pathway.</title>
        <authorList>
            <person name="Petcherski A.G."/>
            <person name="Kimble J."/>
        </authorList>
    </citation>
    <scope>NUCLEOTIDE SEQUENCE [MRNA] (ISOFORMS A AND B)</scope>
    <scope>FUNCTION</scope>
</reference>
<reference key="2">
    <citation type="journal article" date="1998" name="Science">
        <title>Genome sequence of the nematode C. elegans: a platform for investigating biology.</title>
        <authorList>
            <consortium name="The C. elegans sequencing consortium"/>
        </authorList>
    </citation>
    <scope>NUCLEOTIDE SEQUENCE [LARGE SCALE GENOMIC DNA]</scope>
    <source>
        <strain>Bristol N2</strain>
    </source>
</reference>
<reference key="3">
    <citation type="journal article" date="2000" name="Proc. Natl. Acad. Sci. U.S.A.">
        <title>SEL-8, a nuclear protein required for LIN-12 and GLP-1 signaling in Caenorhabditis elegans.</title>
        <authorList>
            <person name="Doyle T.G."/>
            <person name="Wen C."/>
            <person name="Greenwald I."/>
        </authorList>
    </citation>
    <scope>FUNCTION</scope>
    <scope>SUBCELLULAR LOCATION</scope>
    <scope>DISRUPTION PHENOTYPE</scope>
    <scope>MUTAGENESIS OF 409-GLN--ASN-490</scope>
</reference>
<reference key="4">
    <citation type="journal article" date="2006" name="EMBO J.">
        <title>LIP-1 phosphatase controls the extent of germline proliferation in Caenorhabditis elegans.</title>
        <authorList>
            <person name="Lee M.H."/>
            <person name="Hook B."/>
            <person name="Lamont L.B."/>
            <person name="Wickens M."/>
            <person name="Kimble J."/>
        </authorList>
    </citation>
    <scope>FUNCTION</scope>
</reference>
<reference key="5">
    <citation type="journal article" date="2007" name="J. Biol. Chem.">
        <title>The notch regulator MAML1 interacts with p53 and functions as a coactivator.</title>
        <authorList>
            <person name="Zhao Y."/>
            <person name="Katzman R.B."/>
            <person name="Delmolino L.M."/>
            <person name="Bhat I."/>
            <person name="Zhang Y."/>
            <person name="Gurumurthy C.B."/>
            <person name="Germaniuk-Kurowska A."/>
            <person name="Reddi H.V."/>
            <person name="Solomon A."/>
            <person name="Zeng M.S."/>
            <person name="Kung A."/>
            <person name="Ma H."/>
            <person name="Gao Q."/>
            <person name="Dimri G."/>
            <person name="Stanculescu A."/>
            <person name="Miele L."/>
            <person name="Wu L."/>
            <person name="Griffin J.D."/>
            <person name="Wazer D.E."/>
            <person name="Band H."/>
            <person name="Band V."/>
        </authorList>
    </citation>
    <scope>FUNCTION</scope>
    <scope>DISRUPTION PHENOTYPE</scope>
</reference>
<reference key="6">
    <citation type="journal article" date="2020" name="Proc. Natl. Acad. Sci. U.S.A.">
        <title>Two classes of active transcription sites and their roles in developmental regulation.</title>
        <authorList>
            <person name="Robinson-Thiewes S."/>
            <person name="McCloskey J."/>
            <person name="Kimble J."/>
        </authorList>
    </citation>
    <scope>TISSUE SPECIFICITY</scope>
</reference>
<reference evidence="9" key="7">
    <citation type="journal article" date="2006" name="Cell">
        <title>Crystal structure of the CSL-Notch-Mastermind ternary complex bound to DNA.</title>
        <authorList>
            <person name="Wilson J.J."/>
            <person name="Kovall R.A."/>
        </authorList>
    </citation>
    <scope>X-RAY CRYSTALLOGRAPHY (3.12 ANGSTROMS) OF 52-114 IN COMPLEX WITH LIN-12; LAG-1 AND DNA</scope>
    <scope>FUNCTION</scope>
</reference>
<feature type="chain" id="PRO_0000084353" description="Protein lag-3">
    <location>
        <begin position="1"/>
        <end position="490"/>
    </location>
</feature>
<feature type="region of interest" description="Disordered" evidence="1">
    <location>
        <begin position="18"/>
        <end position="55"/>
    </location>
</feature>
<feature type="region of interest" description="Disordered" evidence="1">
    <location>
        <begin position="105"/>
        <end position="155"/>
    </location>
</feature>
<feature type="region of interest" description="Disordered" evidence="1">
    <location>
        <begin position="213"/>
        <end position="235"/>
    </location>
</feature>
<feature type="region of interest" description="Disordered" evidence="1">
    <location>
        <begin position="307"/>
        <end position="362"/>
    </location>
</feature>
<feature type="region of interest" description="Disordered" evidence="1">
    <location>
        <begin position="391"/>
        <end position="490"/>
    </location>
</feature>
<feature type="compositionally biased region" description="Basic and acidic residues" evidence="1">
    <location>
        <begin position="105"/>
        <end position="119"/>
    </location>
</feature>
<feature type="compositionally biased region" description="Polar residues" evidence="1">
    <location>
        <begin position="122"/>
        <end position="138"/>
    </location>
</feature>
<feature type="compositionally biased region" description="Polar residues" evidence="1">
    <location>
        <begin position="307"/>
        <end position="318"/>
    </location>
</feature>
<feature type="compositionally biased region" description="Low complexity" evidence="1">
    <location>
        <begin position="341"/>
        <end position="359"/>
    </location>
</feature>
<feature type="compositionally biased region" description="Low complexity" evidence="1">
    <location>
        <begin position="391"/>
        <end position="404"/>
    </location>
</feature>
<feature type="compositionally biased region" description="Low complexity" evidence="1">
    <location>
        <begin position="413"/>
        <end position="456"/>
    </location>
</feature>
<feature type="splice variant" id="VSP_003908" description="In isoform b." evidence="8">
    <location>
        <begin position="1"/>
        <end position="22"/>
    </location>
</feature>
<feature type="mutagenesis site" description="In sa54; suppresses the phenotype of a lin-12 mutation that induces constitutive activity upon lin-12." evidence="3">
    <location>
        <begin position="409"/>
        <end position="490"/>
    </location>
</feature>
<feature type="helix" evidence="10">
    <location>
        <begin position="60"/>
        <end position="83"/>
    </location>
</feature>
<feature type="helix" evidence="10">
    <location>
        <begin position="85"/>
        <end position="98"/>
    </location>
</feature>
<feature type="helix" evidence="10">
    <location>
        <begin position="100"/>
        <end position="112"/>
    </location>
</feature>
<keyword id="KW-0002">3D-structure</keyword>
<keyword id="KW-0010">Activator</keyword>
<keyword id="KW-0025">Alternative splicing</keyword>
<keyword id="KW-0914">Notch signaling pathway</keyword>
<keyword id="KW-0539">Nucleus</keyword>
<keyword id="KW-1185">Reference proteome</keyword>
<keyword id="KW-0804">Transcription</keyword>
<keyword id="KW-0805">Transcription regulation</keyword>
<proteinExistence type="evidence at protein level"/>
<name>LAG3_CAEEL</name>
<dbReference type="EMBL" id="AF241847">
    <property type="protein sequence ID" value="AAF71523.1"/>
    <property type="molecule type" value="mRNA"/>
</dbReference>
<dbReference type="EMBL" id="AF241846">
    <property type="protein sequence ID" value="AAF71522.1"/>
    <property type="molecule type" value="mRNA"/>
</dbReference>
<dbReference type="EMBL" id="Z48241">
    <property type="protein sequence ID" value="CAA88284.1"/>
    <property type="molecule type" value="Genomic_DNA"/>
</dbReference>
<dbReference type="EMBL" id="Z48241">
    <property type="protein sequence ID" value="CAC42265.1"/>
    <property type="molecule type" value="Genomic_DNA"/>
</dbReference>
<dbReference type="PIR" id="T19628">
    <property type="entry name" value="T19628"/>
</dbReference>
<dbReference type="RefSeq" id="NP_001021194.1">
    <property type="nucleotide sequence ID" value="NM_001026023.2"/>
</dbReference>
<dbReference type="RefSeq" id="NP_001021195.1">
    <molecule id="Q09260-2"/>
    <property type="nucleotide sequence ID" value="NM_001026024.4"/>
</dbReference>
<dbReference type="RefSeq" id="NP_001370114.1">
    <molecule id="Q09260-1"/>
    <property type="nucleotide sequence ID" value="NM_001384056.2"/>
</dbReference>
<dbReference type="PDB" id="2FO1">
    <property type="method" value="X-ray"/>
    <property type="resolution" value="3.12 A"/>
    <property type="chains" value="D=52-114"/>
</dbReference>
<dbReference type="PDBsum" id="2FO1"/>
<dbReference type="SMR" id="Q09260"/>
<dbReference type="BioGRID" id="40704">
    <property type="interactions" value="16"/>
</dbReference>
<dbReference type="ComplexPortal" id="CPX-3152">
    <property type="entry name" value="CSL-Notch-Mastermind transcription factor complex"/>
</dbReference>
<dbReference type="FunCoup" id="Q09260">
    <property type="interactions" value="1778"/>
</dbReference>
<dbReference type="IntAct" id="Q09260">
    <property type="interactions" value="3"/>
</dbReference>
<dbReference type="STRING" id="6239.C32A3.1a.1"/>
<dbReference type="PaxDb" id="6239-C32A3.1a"/>
<dbReference type="EnsemblMetazoa" id="C32A3.1a.1">
    <molecule id="Q09260-1"/>
    <property type="protein sequence ID" value="C32A3.1a.1"/>
    <property type="gene ID" value="WBGene00004765"/>
</dbReference>
<dbReference type="EnsemblMetazoa" id="C32A3.1b.1">
    <molecule id="Q09260-2"/>
    <property type="protein sequence ID" value="C32A3.1b.1"/>
    <property type="gene ID" value="WBGene00004765"/>
</dbReference>
<dbReference type="GeneID" id="175464"/>
<dbReference type="KEGG" id="cel:CELE_C32A3.1"/>
<dbReference type="UCSC" id="C32A3.1b.2">
    <molecule id="Q09260-1"/>
    <property type="organism name" value="c. elegans"/>
</dbReference>
<dbReference type="AGR" id="WB:WBGene00004765"/>
<dbReference type="CTD" id="175464"/>
<dbReference type="WormBase" id="C32A3.1a">
    <molecule id="Q09260-1"/>
    <property type="protein sequence ID" value="CE27810"/>
    <property type="gene ID" value="WBGene00004765"/>
    <property type="gene designation" value="sel-8"/>
</dbReference>
<dbReference type="WormBase" id="C32A3.1b">
    <molecule id="Q09260-2"/>
    <property type="protein sequence ID" value="CE01505"/>
    <property type="gene ID" value="WBGene00004765"/>
    <property type="gene designation" value="sel-8"/>
</dbReference>
<dbReference type="eggNOG" id="ENOG502QRT9">
    <property type="taxonomic scope" value="Eukaryota"/>
</dbReference>
<dbReference type="HOGENOM" id="CLU_696827_0_0_1"/>
<dbReference type="InParanoid" id="Q09260"/>
<dbReference type="OMA" id="HTPFANI"/>
<dbReference type="OrthoDB" id="5875780at2759"/>
<dbReference type="SignaLink" id="Q09260"/>
<dbReference type="PRO" id="PR:Q09260"/>
<dbReference type="Proteomes" id="UP000001940">
    <property type="component" value="Chromosome III"/>
</dbReference>
<dbReference type="Bgee" id="WBGene00004765">
    <property type="expression patterns" value="Expressed in embryo and 3 other cell types or tissues"/>
</dbReference>
<dbReference type="GO" id="GO:1990433">
    <property type="term" value="C:CSL-Notch-Mastermind transcription factor complex"/>
    <property type="evidence" value="ECO:0000353"/>
    <property type="project" value="ComplexPortal"/>
</dbReference>
<dbReference type="GO" id="GO:0005634">
    <property type="term" value="C:nucleus"/>
    <property type="evidence" value="ECO:0000314"/>
    <property type="project" value="WormBase"/>
</dbReference>
<dbReference type="GO" id="GO:0090575">
    <property type="term" value="C:RNA polymerase II transcription regulator complex"/>
    <property type="evidence" value="ECO:0000314"/>
    <property type="project" value="WormBase"/>
</dbReference>
<dbReference type="GO" id="GO:0140297">
    <property type="term" value="F:DNA-binding transcription factor binding"/>
    <property type="evidence" value="ECO:0000353"/>
    <property type="project" value="UniProtKB"/>
</dbReference>
<dbReference type="GO" id="GO:0005112">
    <property type="term" value="F:Notch binding"/>
    <property type="evidence" value="ECO:0000353"/>
    <property type="project" value="UniProtKB"/>
</dbReference>
<dbReference type="GO" id="GO:0003713">
    <property type="term" value="F:transcription coactivator activity"/>
    <property type="evidence" value="ECO:0000314"/>
    <property type="project" value="WormBase"/>
</dbReference>
<dbReference type="GO" id="GO:0007219">
    <property type="term" value="P:Notch signaling pathway"/>
    <property type="evidence" value="ECO:0000314"/>
    <property type="project" value="WormBase"/>
</dbReference>
<dbReference type="GO" id="GO:0045893">
    <property type="term" value="P:positive regulation of DNA-templated transcription"/>
    <property type="evidence" value="ECO:0000303"/>
    <property type="project" value="ComplexPortal"/>
</dbReference>
<dbReference type="GO" id="GO:2000648">
    <property type="term" value="P:positive regulation of stem cell proliferation"/>
    <property type="evidence" value="ECO:0000315"/>
    <property type="project" value="WormBase"/>
</dbReference>
<dbReference type="GO" id="GO:0045944">
    <property type="term" value="P:positive regulation of transcription by RNA polymerase II"/>
    <property type="evidence" value="ECO:0000314"/>
    <property type="project" value="WormBase"/>
</dbReference>
<dbReference type="GO" id="GO:0042661">
    <property type="term" value="P:regulation of mesodermal cell fate specification"/>
    <property type="evidence" value="ECO:0000315"/>
    <property type="project" value="UniProtKB"/>
</dbReference>
<dbReference type="DisProt" id="DP02378"/>
<dbReference type="Gene3D" id="6.10.250.990">
    <property type="match status" value="1"/>
</dbReference>
<dbReference type="IDEAL" id="IID50087"/>
<dbReference type="InterPro" id="IPR021587">
    <property type="entry name" value="Transcription_activator_LAG-3"/>
</dbReference>
<dbReference type="Pfam" id="PF11498">
    <property type="entry name" value="Activator_LAG-3"/>
    <property type="match status" value="1"/>
</dbReference>
<dbReference type="SUPFAM" id="SSF158851">
    <property type="entry name" value="Lag-3 N-terminal region"/>
    <property type="match status" value="1"/>
</dbReference>
<evidence type="ECO:0000256" key="1">
    <source>
        <dbReference type="SAM" id="MobiDB-lite"/>
    </source>
</evidence>
<evidence type="ECO:0000269" key="2">
    <source>
    </source>
</evidence>
<evidence type="ECO:0000269" key="3">
    <source>
    </source>
</evidence>
<evidence type="ECO:0000269" key="4">
    <source>
    </source>
</evidence>
<evidence type="ECO:0000269" key="5">
    <source>
    </source>
</evidence>
<evidence type="ECO:0000269" key="6">
    <source>
    </source>
</evidence>
<evidence type="ECO:0000269" key="7">
    <source>
    </source>
</evidence>
<evidence type="ECO:0000303" key="8">
    <source>
    </source>
</evidence>
<evidence type="ECO:0007744" key="9">
    <source>
        <dbReference type="PDB" id="2FO1"/>
    </source>
</evidence>
<evidence type="ECO:0007829" key="10">
    <source>
        <dbReference type="PDB" id="2FO1"/>
    </source>
</evidence>
<sequence length="490" mass="56482">MDDLSEFFVIEEMFISEPSVAGMKPSTSKTTHSPPPEEPTAPFVNDNLPNPEDEPTIGDLNAFHSGEELHRQRSELARANYEKARPEMIANQRAVTAHLFNRYTEDEERKRVEQQKNKEAMNASTSAPTSSRNGGQSVENRKRRNDVVVAPPTSEEEWKRAQQQHWMGQQQPQMQFQMQQQYHSQQQQYIMMQQQHHHMTGMQQIHHQMPSTSSADSIRSVPTPASSMHQPSPAEMRNGCGMSRNATMDMTCSPMSGGQPIVDENNLAVPEGEWFDKLALAVAEQYNVDTILGPDTYDTFLAELDFSSSESPTKQSPMEMNGDRMPSTAPPPAQNPQHIAQLQQQQNKMRLMQQQQQEMQRIEQQRRQQIMQQQQQQQQQEHQRQQMLLQQQQQQQQMQQHHQMNGGGQFATQAHQQAAYMQQMQRMEQIRHQQQQAQQHQQAQQQHQQQAQHHQMGYGIPNGYPQQMHMHPPAYGAHHMPQPTAFANIN</sequence>
<accession>Q09260</accession>
<accession>Q9NGS2</accession>
<comment type="function">
    <text evidence="2 3 4 5 6">glp-1/Notch and lin-12/Notch proteins promote signaling by recruiting lag-3 to target promoters, where it functions as a transcriptional activator, probably as part of a complex with a Notch intracellular domain (NICD) and the transcription regulator lag-1 (PubMed:10830967, PubMed:10884418, PubMed:16530045). Involved in the p53-mediated germ-cell apoptotic response to DNA damage, perhaps acting as a transcriptional activator (PubMed:17317671). May regulate phosphatase lip-1 mRNA transcription downstream of glp-1 (PubMed:16319922).</text>
</comment>
<comment type="subunit">
    <text evidence="2 5">Component of a complex consisting of at least a lin-12/Notch intracellular domain (NICD), lag-1, and lag-3 (PubMed:10830967, PubMed:16530045). Interacts with a NICD of lin-12/Notch or glp-1/Notch; the interactions are direct (PubMed:10830967, PubMed:16530045).</text>
</comment>
<comment type="subcellular location">
    <subcellularLocation>
        <location evidence="3">Nucleus</location>
    </subcellularLocation>
</comment>
<comment type="alternative products">
    <event type="alternative splicing"/>
    <isoform>
        <id>Q09260-1</id>
        <name>a</name>
        <sequence type="displayed"/>
    </isoform>
    <isoform>
        <id>Q09260-2</id>
        <name>b</name>
        <sequence type="described" ref="VSP_003908"/>
    </isoform>
</comment>
<comment type="tissue specificity">
    <text evidence="7">Expressed in the progenitor zone and the early pachytene region of the hermaphrodite gonad.</text>
</comment>
<comment type="disruption phenotype">
    <text evidence="3 6">RNAi-mediated knockdown causes multiple defects, including large vulval protrusions in hermaphrodites, premature differentiation of germ cells as sperm, and embryonic arrest around the onset of morphogenesis (PubMed:10884418). RNAi-mediated knockdown causes a partial decrease in apoptosis in germ line cells, in the F1 generation, induced by gamma-irradiation (PubMed:17317671). RNAi-mediated knockdown, during treatment by gamma-irradiation, reduces the expression of the p53 target genes, ced-13 and egl-1 (PubMed:17317671).</text>
</comment>
<organism>
    <name type="scientific">Caenorhabditis elegans</name>
    <dbReference type="NCBI Taxonomy" id="6239"/>
    <lineage>
        <taxon>Eukaryota</taxon>
        <taxon>Metazoa</taxon>
        <taxon>Ecdysozoa</taxon>
        <taxon>Nematoda</taxon>
        <taxon>Chromadorea</taxon>
        <taxon>Rhabditida</taxon>
        <taxon>Rhabditina</taxon>
        <taxon>Rhabditomorpha</taxon>
        <taxon>Rhabditoidea</taxon>
        <taxon>Rhabditidae</taxon>
        <taxon>Peloderinae</taxon>
        <taxon>Caenorhabditis</taxon>
    </lineage>
</organism>
<protein>
    <recommendedName>
        <fullName>Protein lag-3</fullName>
    </recommendedName>
    <alternativeName>
        <fullName>Abnormal cell lineage protein 3</fullName>
    </alternativeName>
    <alternativeName>
        <fullName>Abnormal germline proliferation protein 3</fullName>
    </alternativeName>
</protein>